<accession>Q0HE39</accession>
<proteinExistence type="inferred from homology"/>
<feature type="chain" id="PRO_1000006014" description="DNA-directed RNA polymerase subunit omega">
    <location>
        <begin position="1"/>
        <end position="92"/>
    </location>
</feature>
<evidence type="ECO:0000255" key="1">
    <source>
        <dbReference type="HAMAP-Rule" id="MF_00366"/>
    </source>
</evidence>
<gene>
    <name evidence="1" type="primary">rpoZ</name>
    <name type="ordered locus">Shewmr4_3614</name>
</gene>
<reference key="1">
    <citation type="submission" date="2006-08" db="EMBL/GenBank/DDBJ databases">
        <title>Complete sequence of Shewanella sp. MR-4.</title>
        <authorList>
            <consortium name="US DOE Joint Genome Institute"/>
            <person name="Copeland A."/>
            <person name="Lucas S."/>
            <person name="Lapidus A."/>
            <person name="Barry K."/>
            <person name="Detter J.C."/>
            <person name="Glavina del Rio T."/>
            <person name="Hammon N."/>
            <person name="Israni S."/>
            <person name="Dalin E."/>
            <person name="Tice H."/>
            <person name="Pitluck S."/>
            <person name="Kiss H."/>
            <person name="Brettin T."/>
            <person name="Bruce D."/>
            <person name="Han C."/>
            <person name="Tapia R."/>
            <person name="Gilna P."/>
            <person name="Schmutz J."/>
            <person name="Larimer F."/>
            <person name="Land M."/>
            <person name="Hauser L."/>
            <person name="Kyrpides N."/>
            <person name="Mikhailova N."/>
            <person name="Nealson K."/>
            <person name="Konstantinidis K."/>
            <person name="Klappenbach J."/>
            <person name="Tiedje J."/>
            <person name="Richardson P."/>
        </authorList>
    </citation>
    <scope>NUCLEOTIDE SEQUENCE [LARGE SCALE GENOMIC DNA]</scope>
    <source>
        <strain>MR-4</strain>
    </source>
</reference>
<organism>
    <name type="scientific">Shewanella sp. (strain MR-4)</name>
    <dbReference type="NCBI Taxonomy" id="60480"/>
    <lineage>
        <taxon>Bacteria</taxon>
        <taxon>Pseudomonadati</taxon>
        <taxon>Pseudomonadota</taxon>
        <taxon>Gammaproteobacteria</taxon>
        <taxon>Alteromonadales</taxon>
        <taxon>Shewanellaceae</taxon>
        <taxon>Shewanella</taxon>
    </lineage>
</organism>
<comment type="function">
    <text evidence="1">Promotes RNA polymerase assembly. Latches the N- and C-terminal regions of the beta' subunit thereby facilitating its interaction with the beta and alpha subunits.</text>
</comment>
<comment type="catalytic activity">
    <reaction evidence="1">
        <text>RNA(n) + a ribonucleoside 5'-triphosphate = RNA(n+1) + diphosphate</text>
        <dbReference type="Rhea" id="RHEA:21248"/>
        <dbReference type="Rhea" id="RHEA-COMP:14527"/>
        <dbReference type="Rhea" id="RHEA-COMP:17342"/>
        <dbReference type="ChEBI" id="CHEBI:33019"/>
        <dbReference type="ChEBI" id="CHEBI:61557"/>
        <dbReference type="ChEBI" id="CHEBI:140395"/>
        <dbReference type="EC" id="2.7.7.6"/>
    </reaction>
</comment>
<comment type="subunit">
    <text evidence="1">The RNAP catalytic core consists of 2 alpha, 1 beta, 1 beta' and 1 omega subunit. When a sigma factor is associated with the core the holoenzyme is formed, which can initiate transcription.</text>
</comment>
<comment type="similarity">
    <text evidence="1">Belongs to the RNA polymerase subunit omega family.</text>
</comment>
<sequence>MARVTVEDAVEQIGNRFDMILVAARRARQIAVQGKDPMVEEMNDKPTVIALREIELGLVNAHTLDADERQSVREREAAEIAAVAAIAEGRSL</sequence>
<name>RPOZ_SHESM</name>
<protein>
    <recommendedName>
        <fullName evidence="1">DNA-directed RNA polymerase subunit omega</fullName>
        <shortName evidence="1">RNAP omega subunit</shortName>
        <ecNumber evidence="1">2.7.7.6</ecNumber>
    </recommendedName>
    <alternativeName>
        <fullName evidence="1">RNA polymerase omega subunit</fullName>
    </alternativeName>
    <alternativeName>
        <fullName evidence="1">Transcriptase subunit omega</fullName>
    </alternativeName>
</protein>
<dbReference type="EC" id="2.7.7.6" evidence="1"/>
<dbReference type="EMBL" id="CP000446">
    <property type="protein sequence ID" value="ABI40678.1"/>
    <property type="molecule type" value="Genomic_DNA"/>
</dbReference>
<dbReference type="RefSeq" id="WP_011624339.1">
    <property type="nucleotide sequence ID" value="NC_008321.1"/>
</dbReference>
<dbReference type="SMR" id="Q0HE39"/>
<dbReference type="GeneID" id="94729735"/>
<dbReference type="KEGG" id="she:Shewmr4_3614"/>
<dbReference type="HOGENOM" id="CLU_125406_5_3_6"/>
<dbReference type="GO" id="GO:0000428">
    <property type="term" value="C:DNA-directed RNA polymerase complex"/>
    <property type="evidence" value="ECO:0007669"/>
    <property type="project" value="UniProtKB-KW"/>
</dbReference>
<dbReference type="GO" id="GO:0003677">
    <property type="term" value="F:DNA binding"/>
    <property type="evidence" value="ECO:0007669"/>
    <property type="project" value="UniProtKB-UniRule"/>
</dbReference>
<dbReference type="GO" id="GO:0003899">
    <property type="term" value="F:DNA-directed RNA polymerase activity"/>
    <property type="evidence" value="ECO:0007669"/>
    <property type="project" value="UniProtKB-UniRule"/>
</dbReference>
<dbReference type="GO" id="GO:0006351">
    <property type="term" value="P:DNA-templated transcription"/>
    <property type="evidence" value="ECO:0007669"/>
    <property type="project" value="UniProtKB-UniRule"/>
</dbReference>
<dbReference type="Gene3D" id="3.90.940.10">
    <property type="match status" value="1"/>
</dbReference>
<dbReference type="HAMAP" id="MF_00366">
    <property type="entry name" value="RNApol_bact_RpoZ"/>
    <property type="match status" value="1"/>
</dbReference>
<dbReference type="InterPro" id="IPR003716">
    <property type="entry name" value="DNA-dir_RNA_pol_omega"/>
</dbReference>
<dbReference type="InterPro" id="IPR006110">
    <property type="entry name" value="Pol_omega/Rpo6/RPB6"/>
</dbReference>
<dbReference type="InterPro" id="IPR036161">
    <property type="entry name" value="RPB6/omega-like_sf"/>
</dbReference>
<dbReference type="NCBIfam" id="TIGR00690">
    <property type="entry name" value="rpoZ"/>
    <property type="match status" value="1"/>
</dbReference>
<dbReference type="PANTHER" id="PTHR34476">
    <property type="entry name" value="DNA-DIRECTED RNA POLYMERASE SUBUNIT OMEGA"/>
    <property type="match status" value="1"/>
</dbReference>
<dbReference type="PANTHER" id="PTHR34476:SF1">
    <property type="entry name" value="DNA-DIRECTED RNA POLYMERASE SUBUNIT OMEGA"/>
    <property type="match status" value="1"/>
</dbReference>
<dbReference type="Pfam" id="PF01192">
    <property type="entry name" value="RNA_pol_Rpb6"/>
    <property type="match status" value="1"/>
</dbReference>
<dbReference type="SMART" id="SM01409">
    <property type="entry name" value="RNA_pol_Rpb6"/>
    <property type="match status" value="1"/>
</dbReference>
<dbReference type="SUPFAM" id="SSF63562">
    <property type="entry name" value="RPB6/omega subunit-like"/>
    <property type="match status" value="1"/>
</dbReference>
<keyword id="KW-0240">DNA-directed RNA polymerase</keyword>
<keyword id="KW-0548">Nucleotidyltransferase</keyword>
<keyword id="KW-0804">Transcription</keyword>
<keyword id="KW-0808">Transferase</keyword>